<sequence>MKFIIKLFPEITIKSKSVRQRMVKILQGNIRNVLQKVDETVTVRNDWDKLMVSSKNDSPENRDKLVERLSCMPGIQAFLEVTQVPFTDLHDIYEQTAAVYGPTLANKTFCVRVKRKGKHEFTSIEIERYVGGGLNQNFPSNGVRLSHPDLQINLQIENELLYLVTAIHKGLGGYPLSTQEDVLSLISGGFDSGVASYLFIKRGSRVHYCFFNLGGAAHEIGVKQVAYYLWSKYSQSHKVKFVSVPFEPVVGEILEKIDNGLMGVVLKRMMMRAASRVAERMGVEALVTGESVGQVSSQTVTNLSVIDRVTDTLILRPLIVSDKQDIIDQARAIGTQEFAETMPEYCGVISNKPTVKARYEEVLANEAKFNFDVLENVITSAKVIDIREIANETEAQVQEVETTSALAENEVILDIRSPDEHEDKPFNPEGMTVIHLPFYKLSTQFGDLDQSKTYLLYCERGVMSKLQALYLKEQGFNNIKVYRQN</sequence>
<gene>
    <name evidence="1" type="primary">thiI</name>
    <name type="ordered locus">Tola_2502</name>
</gene>
<dbReference type="EC" id="2.8.1.4" evidence="1"/>
<dbReference type="EMBL" id="CP001616">
    <property type="protein sequence ID" value="ACQ94096.1"/>
    <property type="molecule type" value="Genomic_DNA"/>
</dbReference>
<dbReference type="RefSeq" id="WP_015879545.1">
    <property type="nucleotide sequence ID" value="NC_012691.1"/>
</dbReference>
<dbReference type="SMR" id="C4LAC1"/>
<dbReference type="STRING" id="595494.Tola_2502"/>
<dbReference type="KEGG" id="tau:Tola_2502"/>
<dbReference type="eggNOG" id="COG0301">
    <property type="taxonomic scope" value="Bacteria"/>
</dbReference>
<dbReference type="eggNOG" id="COG0607">
    <property type="taxonomic scope" value="Bacteria"/>
</dbReference>
<dbReference type="HOGENOM" id="CLU_037952_4_1_6"/>
<dbReference type="OrthoDB" id="9773948at2"/>
<dbReference type="UniPathway" id="UPA00060"/>
<dbReference type="Proteomes" id="UP000009073">
    <property type="component" value="Chromosome"/>
</dbReference>
<dbReference type="GO" id="GO:0005829">
    <property type="term" value="C:cytosol"/>
    <property type="evidence" value="ECO:0007669"/>
    <property type="project" value="TreeGrafter"/>
</dbReference>
<dbReference type="GO" id="GO:0005524">
    <property type="term" value="F:ATP binding"/>
    <property type="evidence" value="ECO:0007669"/>
    <property type="project" value="UniProtKB-UniRule"/>
</dbReference>
<dbReference type="GO" id="GO:0004810">
    <property type="term" value="F:CCA tRNA nucleotidyltransferase activity"/>
    <property type="evidence" value="ECO:0007669"/>
    <property type="project" value="InterPro"/>
</dbReference>
<dbReference type="GO" id="GO:0000049">
    <property type="term" value="F:tRNA binding"/>
    <property type="evidence" value="ECO:0007669"/>
    <property type="project" value="UniProtKB-UniRule"/>
</dbReference>
<dbReference type="GO" id="GO:0140741">
    <property type="term" value="F:tRNA-uracil-4 sulfurtransferase activity"/>
    <property type="evidence" value="ECO:0007669"/>
    <property type="project" value="UniProtKB-EC"/>
</dbReference>
<dbReference type="GO" id="GO:0009228">
    <property type="term" value="P:thiamine biosynthetic process"/>
    <property type="evidence" value="ECO:0007669"/>
    <property type="project" value="UniProtKB-KW"/>
</dbReference>
<dbReference type="GO" id="GO:0009229">
    <property type="term" value="P:thiamine diphosphate biosynthetic process"/>
    <property type="evidence" value="ECO:0007669"/>
    <property type="project" value="UniProtKB-UniRule"/>
</dbReference>
<dbReference type="GO" id="GO:0052837">
    <property type="term" value="P:thiazole biosynthetic process"/>
    <property type="evidence" value="ECO:0007669"/>
    <property type="project" value="InterPro"/>
</dbReference>
<dbReference type="GO" id="GO:0002937">
    <property type="term" value="P:tRNA 4-thiouridine biosynthesis"/>
    <property type="evidence" value="ECO:0007669"/>
    <property type="project" value="TreeGrafter"/>
</dbReference>
<dbReference type="CDD" id="cd01712">
    <property type="entry name" value="PPase_ThiI"/>
    <property type="match status" value="1"/>
</dbReference>
<dbReference type="CDD" id="cd00158">
    <property type="entry name" value="RHOD"/>
    <property type="match status" value="1"/>
</dbReference>
<dbReference type="CDD" id="cd11716">
    <property type="entry name" value="THUMP_ThiI"/>
    <property type="match status" value="1"/>
</dbReference>
<dbReference type="FunFam" id="3.40.50.620:FF:000029">
    <property type="entry name" value="tRNA sulfurtransferase"/>
    <property type="match status" value="1"/>
</dbReference>
<dbReference type="Gene3D" id="3.30.2130.30">
    <property type="match status" value="1"/>
</dbReference>
<dbReference type="Gene3D" id="3.40.50.620">
    <property type="entry name" value="HUPs"/>
    <property type="match status" value="1"/>
</dbReference>
<dbReference type="Gene3D" id="3.40.250.10">
    <property type="entry name" value="Rhodanese-like domain"/>
    <property type="match status" value="1"/>
</dbReference>
<dbReference type="HAMAP" id="MF_00021">
    <property type="entry name" value="ThiI"/>
    <property type="match status" value="1"/>
</dbReference>
<dbReference type="InterPro" id="IPR001763">
    <property type="entry name" value="Rhodanese-like_dom"/>
</dbReference>
<dbReference type="InterPro" id="IPR036873">
    <property type="entry name" value="Rhodanese-like_dom_sf"/>
</dbReference>
<dbReference type="InterPro" id="IPR014729">
    <property type="entry name" value="Rossmann-like_a/b/a_fold"/>
</dbReference>
<dbReference type="InterPro" id="IPR020536">
    <property type="entry name" value="ThiI_AANH"/>
</dbReference>
<dbReference type="InterPro" id="IPR054173">
    <property type="entry name" value="ThiI_fer"/>
</dbReference>
<dbReference type="InterPro" id="IPR049961">
    <property type="entry name" value="ThiI_N"/>
</dbReference>
<dbReference type="InterPro" id="IPR026340">
    <property type="entry name" value="THII_Thiazole_biosynth_dom"/>
</dbReference>
<dbReference type="InterPro" id="IPR004114">
    <property type="entry name" value="THUMP_dom"/>
</dbReference>
<dbReference type="InterPro" id="IPR049962">
    <property type="entry name" value="THUMP_ThiI"/>
</dbReference>
<dbReference type="InterPro" id="IPR003720">
    <property type="entry name" value="tRNA_STrfase"/>
</dbReference>
<dbReference type="InterPro" id="IPR050102">
    <property type="entry name" value="tRNA_sulfurtransferase_ThiI"/>
</dbReference>
<dbReference type="NCBIfam" id="TIGR04271">
    <property type="entry name" value="ThiI_C_thiazole"/>
    <property type="match status" value="1"/>
</dbReference>
<dbReference type="NCBIfam" id="TIGR00342">
    <property type="entry name" value="tRNA uracil 4-sulfurtransferase ThiI"/>
    <property type="match status" value="1"/>
</dbReference>
<dbReference type="PANTHER" id="PTHR43209">
    <property type="entry name" value="TRNA SULFURTRANSFERASE"/>
    <property type="match status" value="1"/>
</dbReference>
<dbReference type="PANTHER" id="PTHR43209:SF1">
    <property type="entry name" value="TRNA SULFURTRANSFERASE"/>
    <property type="match status" value="1"/>
</dbReference>
<dbReference type="Pfam" id="PF00581">
    <property type="entry name" value="Rhodanese"/>
    <property type="match status" value="1"/>
</dbReference>
<dbReference type="Pfam" id="PF02568">
    <property type="entry name" value="ThiI"/>
    <property type="match status" value="1"/>
</dbReference>
<dbReference type="Pfam" id="PF22025">
    <property type="entry name" value="ThiI_fer"/>
    <property type="match status" value="1"/>
</dbReference>
<dbReference type="Pfam" id="PF02926">
    <property type="entry name" value="THUMP"/>
    <property type="match status" value="1"/>
</dbReference>
<dbReference type="SMART" id="SM00981">
    <property type="entry name" value="THUMP"/>
    <property type="match status" value="1"/>
</dbReference>
<dbReference type="SUPFAM" id="SSF52402">
    <property type="entry name" value="Adenine nucleotide alpha hydrolases-like"/>
    <property type="match status" value="1"/>
</dbReference>
<dbReference type="SUPFAM" id="SSF52821">
    <property type="entry name" value="Rhodanese/Cell cycle control phosphatase"/>
    <property type="match status" value="1"/>
</dbReference>
<dbReference type="SUPFAM" id="SSF143437">
    <property type="entry name" value="THUMP domain-like"/>
    <property type="match status" value="1"/>
</dbReference>
<dbReference type="PROSITE" id="PS50206">
    <property type="entry name" value="RHODANESE_3"/>
    <property type="match status" value="1"/>
</dbReference>
<dbReference type="PROSITE" id="PS51165">
    <property type="entry name" value="THUMP"/>
    <property type="match status" value="1"/>
</dbReference>
<evidence type="ECO:0000255" key="1">
    <source>
        <dbReference type="HAMAP-Rule" id="MF_00021"/>
    </source>
</evidence>
<feature type="chain" id="PRO_1000201926" description="tRNA sulfurtransferase">
    <location>
        <begin position="1"/>
        <end position="485"/>
    </location>
</feature>
<feature type="domain" description="THUMP" evidence="1">
    <location>
        <begin position="63"/>
        <end position="167"/>
    </location>
</feature>
<feature type="domain" description="Rhodanese" evidence="1">
    <location>
        <begin position="406"/>
        <end position="485"/>
    </location>
</feature>
<feature type="active site" description="Cysteine persulfide intermediate" evidence="1">
    <location>
        <position position="458"/>
    </location>
</feature>
<feature type="binding site" evidence="1">
    <location>
        <begin position="185"/>
        <end position="186"/>
    </location>
    <ligand>
        <name>ATP</name>
        <dbReference type="ChEBI" id="CHEBI:30616"/>
    </ligand>
</feature>
<feature type="binding site" evidence="1">
    <location>
        <position position="267"/>
    </location>
    <ligand>
        <name>ATP</name>
        <dbReference type="ChEBI" id="CHEBI:30616"/>
    </ligand>
</feature>
<feature type="binding site" evidence="1">
    <location>
        <position position="289"/>
    </location>
    <ligand>
        <name>ATP</name>
        <dbReference type="ChEBI" id="CHEBI:30616"/>
    </ligand>
</feature>
<feature type="binding site" evidence="1">
    <location>
        <position position="298"/>
    </location>
    <ligand>
        <name>ATP</name>
        <dbReference type="ChEBI" id="CHEBI:30616"/>
    </ligand>
</feature>
<feature type="disulfide bond" description="Redox-active" evidence="1">
    <location>
        <begin position="346"/>
        <end position="458"/>
    </location>
</feature>
<accession>C4LAC1</accession>
<keyword id="KW-0067">ATP-binding</keyword>
<keyword id="KW-0963">Cytoplasm</keyword>
<keyword id="KW-1015">Disulfide bond</keyword>
<keyword id="KW-0547">Nucleotide-binding</keyword>
<keyword id="KW-0676">Redox-active center</keyword>
<keyword id="KW-1185">Reference proteome</keyword>
<keyword id="KW-0694">RNA-binding</keyword>
<keyword id="KW-0784">Thiamine biosynthesis</keyword>
<keyword id="KW-0808">Transferase</keyword>
<keyword id="KW-0820">tRNA-binding</keyword>
<name>THII_TOLAT</name>
<organism>
    <name type="scientific">Tolumonas auensis (strain DSM 9187 / NBRC 110442 / TA 4)</name>
    <dbReference type="NCBI Taxonomy" id="595494"/>
    <lineage>
        <taxon>Bacteria</taxon>
        <taxon>Pseudomonadati</taxon>
        <taxon>Pseudomonadota</taxon>
        <taxon>Gammaproteobacteria</taxon>
        <taxon>Aeromonadales</taxon>
        <taxon>Aeromonadaceae</taxon>
        <taxon>Tolumonas</taxon>
    </lineage>
</organism>
<reference key="1">
    <citation type="submission" date="2009-05" db="EMBL/GenBank/DDBJ databases">
        <title>Complete sequence of Tolumonas auensis DSM 9187.</title>
        <authorList>
            <consortium name="US DOE Joint Genome Institute"/>
            <person name="Lucas S."/>
            <person name="Copeland A."/>
            <person name="Lapidus A."/>
            <person name="Glavina del Rio T."/>
            <person name="Tice H."/>
            <person name="Bruce D."/>
            <person name="Goodwin L."/>
            <person name="Pitluck S."/>
            <person name="Chertkov O."/>
            <person name="Brettin T."/>
            <person name="Detter J.C."/>
            <person name="Han C."/>
            <person name="Larimer F."/>
            <person name="Land M."/>
            <person name="Hauser L."/>
            <person name="Kyrpides N."/>
            <person name="Mikhailova N."/>
            <person name="Spring S."/>
            <person name="Beller H."/>
        </authorList>
    </citation>
    <scope>NUCLEOTIDE SEQUENCE [LARGE SCALE GENOMIC DNA]</scope>
    <source>
        <strain>DSM 9187 / NBRC 110442 / TA 4</strain>
    </source>
</reference>
<comment type="function">
    <text evidence="1">Catalyzes the ATP-dependent transfer of a sulfur to tRNA to produce 4-thiouridine in position 8 of tRNAs, which functions as a near-UV photosensor. Also catalyzes the transfer of sulfur to the sulfur carrier protein ThiS, forming ThiS-thiocarboxylate. This is a step in the synthesis of thiazole, in the thiamine biosynthesis pathway. The sulfur is donated as persulfide by IscS.</text>
</comment>
<comment type="catalytic activity">
    <reaction evidence="1">
        <text>[ThiI sulfur-carrier protein]-S-sulfanyl-L-cysteine + a uridine in tRNA + 2 reduced [2Fe-2S]-[ferredoxin] + ATP + H(+) = [ThiI sulfur-carrier protein]-L-cysteine + a 4-thiouridine in tRNA + 2 oxidized [2Fe-2S]-[ferredoxin] + AMP + diphosphate</text>
        <dbReference type="Rhea" id="RHEA:24176"/>
        <dbReference type="Rhea" id="RHEA-COMP:10000"/>
        <dbReference type="Rhea" id="RHEA-COMP:10001"/>
        <dbReference type="Rhea" id="RHEA-COMP:13337"/>
        <dbReference type="Rhea" id="RHEA-COMP:13338"/>
        <dbReference type="Rhea" id="RHEA-COMP:13339"/>
        <dbReference type="Rhea" id="RHEA-COMP:13340"/>
        <dbReference type="ChEBI" id="CHEBI:15378"/>
        <dbReference type="ChEBI" id="CHEBI:29950"/>
        <dbReference type="ChEBI" id="CHEBI:30616"/>
        <dbReference type="ChEBI" id="CHEBI:33019"/>
        <dbReference type="ChEBI" id="CHEBI:33737"/>
        <dbReference type="ChEBI" id="CHEBI:33738"/>
        <dbReference type="ChEBI" id="CHEBI:61963"/>
        <dbReference type="ChEBI" id="CHEBI:65315"/>
        <dbReference type="ChEBI" id="CHEBI:136798"/>
        <dbReference type="ChEBI" id="CHEBI:456215"/>
        <dbReference type="EC" id="2.8.1.4"/>
    </reaction>
</comment>
<comment type="catalytic activity">
    <reaction evidence="1">
        <text>[ThiS sulfur-carrier protein]-C-terminal Gly-Gly-AMP + S-sulfanyl-L-cysteinyl-[cysteine desulfurase] + AH2 = [ThiS sulfur-carrier protein]-C-terminal-Gly-aminoethanethioate + L-cysteinyl-[cysteine desulfurase] + A + AMP + 2 H(+)</text>
        <dbReference type="Rhea" id="RHEA:43340"/>
        <dbReference type="Rhea" id="RHEA-COMP:12157"/>
        <dbReference type="Rhea" id="RHEA-COMP:12158"/>
        <dbReference type="Rhea" id="RHEA-COMP:12910"/>
        <dbReference type="Rhea" id="RHEA-COMP:19908"/>
        <dbReference type="ChEBI" id="CHEBI:13193"/>
        <dbReference type="ChEBI" id="CHEBI:15378"/>
        <dbReference type="ChEBI" id="CHEBI:17499"/>
        <dbReference type="ChEBI" id="CHEBI:29950"/>
        <dbReference type="ChEBI" id="CHEBI:61963"/>
        <dbReference type="ChEBI" id="CHEBI:90618"/>
        <dbReference type="ChEBI" id="CHEBI:232372"/>
        <dbReference type="ChEBI" id="CHEBI:456215"/>
    </reaction>
</comment>
<comment type="pathway">
    <text evidence="1">Cofactor biosynthesis; thiamine diphosphate biosynthesis.</text>
</comment>
<comment type="subcellular location">
    <subcellularLocation>
        <location evidence="1">Cytoplasm</location>
    </subcellularLocation>
</comment>
<comment type="similarity">
    <text evidence="1">Belongs to the ThiI family.</text>
</comment>
<proteinExistence type="inferred from homology"/>
<protein>
    <recommendedName>
        <fullName evidence="1">tRNA sulfurtransferase</fullName>
        <ecNumber evidence="1">2.8.1.4</ecNumber>
    </recommendedName>
    <alternativeName>
        <fullName evidence="1">Sulfur carrier protein ThiS sulfurtransferase</fullName>
    </alternativeName>
    <alternativeName>
        <fullName evidence="1">Thiamine biosynthesis protein ThiI</fullName>
    </alternativeName>
    <alternativeName>
        <fullName evidence="1">tRNA 4-thiouridine synthase</fullName>
    </alternativeName>
</protein>